<sequence length="201" mass="22614">MILQVVLLLACLSGAIVSTGACCPPSRFNAFQYVTIVNSTTRTRGLYYMVYDGPNERYLLTGDRLKNLYGTTRVIYDYKKGIAYNIDVQKRSCTTFPLHGKFEDQENVCVPRDAVYTGRSAYGFDQGALHSWSYEYNRTHPDGRHQNIETTVTKENCIPIVTTTISTDASGGNSLHILGYNDFYPGIRDISMLEIPSYCRA</sequence>
<name>EPDR2_HALAI</name>
<feature type="signal peptide" evidence="1">
    <location>
        <begin position="1"/>
        <end position="21"/>
    </location>
</feature>
<feature type="chain" id="PRO_0000399463" description="Ependymin-related protein 2" evidence="1">
    <location>
        <begin position="22"/>
        <end position="201"/>
    </location>
</feature>
<feature type="short sequence motif" description="Microbody targeting signal" evidence="1">
    <location>
        <begin position="199"/>
        <end position="201"/>
    </location>
</feature>
<feature type="glycosylation site" description="N-linked (GlcNAc...) asparagine" evidence="1">
    <location>
        <position position="38"/>
    </location>
</feature>
<feature type="glycosylation site" description="N-linked (GlcNAc...) asparagine" evidence="1">
    <location>
        <position position="137"/>
    </location>
</feature>
<protein>
    <recommendedName>
        <fullName>Ependymin-related protein 2</fullName>
    </recommendedName>
</protein>
<dbReference type="EMBL" id="GD272908">
    <property type="status" value="NOT_ANNOTATED_CDS"/>
    <property type="molecule type" value="mRNA"/>
</dbReference>
<dbReference type="SMR" id="P86729"/>
<dbReference type="GO" id="GO:0005576">
    <property type="term" value="C:extracellular region"/>
    <property type="evidence" value="ECO:0000314"/>
    <property type="project" value="UniProtKB"/>
</dbReference>
<dbReference type="GO" id="GO:0005764">
    <property type="term" value="C:lysosome"/>
    <property type="evidence" value="ECO:0007669"/>
    <property type="project" value="TreeGrafter"/>
</dbReference>
<dbReference type="GO" id="GO:0005509">
    <property type="term" value="F:calcium ion binding"/>
    <property type="evidence" value="ECO:0007669"/>
    <property type="project" value="InterPro"/>
</dbReference>
<dbReference type="GO" id="GO:0007160">
    <property type="term" value="P:cell-matrix adhesion"/>
    <property type="evidence" value="ECO:0007669"/>
    <property type="project" value="InterPro"/>
</dbReference>
<dbReference type="InterPro" id="IPR001299">
    <property type="entry name" value="Ependymin"/>
</dbReference>
<dbReference type="PANTHER" id="PTHR10697">
    <property type="entry name" value="MAMMALIAN EPENDYMIN-RELATED PROTEIN 1"/>
    <property type="match status" value="1"/>
</dbReference>
<dbReference type="PANTHER" id="PTHR10697:SF13">
    <property type="entry name" value="RICIN B LECTIN DOMAIN-CONTAINING PROTEIN"/>
    <property type="match status" value="1"/>
</dbReference>
<dbReference type="Pfam" id="PF00811">
    <property type="entry name" value="Ependymin"/>
    <property type="match status" value="1"/>
</dbReference>
<reference evidence="4" key="1">
    <citation type="journal article" date="2009" name="Mol. Ecol.">
        <title>Widespread transcriptional changes pre-empt the critical pelagic-benthic transition in the vetigastropod Haliotis asinina.</title>
        <authorList>
            <person name="Williams E.A."/>
            <person name="Degnan B.M."/>
            <person name="Gunter H."/>
            <person name="Jackson D.J."/>
            <person name="Woodcroft B.J."/>
            <person name="Degnan S.M."/>
        </authorList>
    </citation>
    <scope>NUCLEOTIDE SEQUENCE [MRNA]</scope>
    <source>
        <tissue evidence="2">Larva</tissue>
    </source>
</reference>
<reference evidence="4" key="2">
    <citation type="journal article" date="2010" name="Proteome Sci.">
        <title>Proteomic analysis of the organic matrix of the abalone Haliotis asinina calcified shell.</title>
        <authorList>
            <person name="Marie B."/>
            <person name="Marie A."/>
            <person name="Jackson D.J."/>
            <person name="Dubost L."/>
            <person name="Degnan B.M."/>
            <person name="Milet C."/>
            <person name="Marin F."/>
        </authorList>
    </citation>
    <scope>PROTEIN SEQUENCE OF 45-64 AND 81-91</scope>
    <scope>SUBCELLULAR LOCATION</scope>
    <scope>TISSUE SPECIFICITY</scope>
    <source>
        <tissue evidence="3">Shell</tissue>
    </source>
</reference>
<accession>P86729</accession>
<comment type="subcellular location">
    <subcellularLocation>
        <location evidence="3">Secreted</location>
    </subcellularLocation>
</comment>
<comment type="tissue specificity">
    <text evidence="3">Component of the acid-soluble and acid-insoluble organic matrix of calcified shell layers (at protein level).</text>
</comment>
<comment type="similarity">
    <text evidence="1">Belongs to the ependymin family.</text>
</comment>
<evidence type="ECO:0000255" key="1"/>
<evidence type="ECO:0000269" key="2">
    <source>
    </source>
</evidence>
<evidence type="ECO:0000269" key="3">
    <source>
    </source>
</evidence>
<evidence type="ECO:0000305" key="4"/>
<keyword id="KW-0903">Direct protein sequencing</keyword>
<keyword id="KW-0325">Glycoprotein</keyword>
<keyword id="KW-0964">Secreted</keyword>
<keyword id="KW-0732">Signal</keyword>
<proteinExistence type="evidence at protein level"/>
<organism>
    <name type="scientific">Haliotis asinina</name>
    <name type="common">Donkey's ear abalone</name>
    <name type="synonym">Ass's ear abalone</name>
    <dbReference type="NCBI Taxonomy" id="109174"/>
    <lineage>
        <taxon>Eukaryota</taxon>
        <taxon>Metazoa</taxon>
        <taxon>Spiralia</taxon>
        <taxon>Lophotrochozoa</taxon>
        <taxon>Mollusca</taxon>
        <taxon>Gastropoda</taxon>
        <taxon>Vetigastropoda</taxon>
        <taxon>Lepetellida</taxon>
        <taxon>Haliotoidea</taxon>
        <taxon>Haliotidae</taxon>
        <taxon>Haliotis</taxon>
    </lineage>
</organism>